<protein>
    <recommendedName>
        <fullName evidence="3">Large ribosomal subunit protein eL30</fullName>
    </recommendedName>
    <alternativeName>
        <fullName>60S ribosomal protein L30</fullName>
    </alternativeName>
</protein>
<proteinExistence type="evidence at protein level"/>
<accession>P62888</accession>
<accession>B2R591</accession>
<accession>P04645</accession>
<accession>Q502Z6</accession>
<evidence type="ECO:0000269" key="1">
    <source>
    </source>
</evidence>
<evidence type="ECO:0000269" key="2">
    <source>
    </source>
</evidence>
<evidence type="ECO:0000303" key="3">
    <source>
    </source>
</evidence>
<evidence type="ECO:0000305" key="4"/>
<evidence type="ECO:0007744" key="5">
    <source>
        <dbReference type="PDB" id="6LQM"/>
    </source>
</evidence>
<evidence type="ECO:0007744" key="6">
    <source>
        <dbReference type="PDB" id="6LSR"/>
    </source>
</evidence>
<evidence type="ECO:0007744" key="7">
    <source>
        <dbReference type="PDB" id="6LSS"/>
    </source>
</evidence>
<evidence type="ECO:0007744" key="8">
    <source>
        <dbReference type="PDB" id="6LU8"/>
    </source>
</evidence>
<evidence type="ECO:0007744" key="9">
    <source>
    </source>
</evidence>
<evidence type="ECO:0007744" key="10">
    <source>
    </source>
</evidence>
<evidence type="ECO:0007744" key="11">
    <source>
    </source>
</evidence>
<evidence type="ECO:0007744" key="12">
    <source>
    </source>
</evidence>
<evidence type="ECO:0007744" key="13">
    <source>
    </source>
</evidence>
<evidence type="ECO:0007744" key="14">
    <source>
    </source>
</evidence>
<evidence type="ECO:0007829" key="15">
    <source>
        <dbReference type="PDB" id="3VI6"/>
    </source>
</evidence>
<comment type="function">
    <text evidence="1 2">Component of the large ribosomal subunit (PubMed:23636399, PubMed:32669547). The ribosome is a large ribonucleoprotein complex responsible for the synthesis of proteins in the cell (PubMed:23636399, PubMed:32669547).</text>
</comment>
<comment type="subunit">
    <text evidence="1 2">Component of the large ribosomal subunit.</text>
</comment>
<comment type="interaction">
    <interactant intactId="EBI-353116">
        <id>P62888</id>
    </interactant>
    <interactant intactId="EBI-5323863">
        <id>Q5S007</id>
        <label>LRRK2</label>
    </interactant>
    <organismsDiffer>false</organismsDiffer>
    <experiments>3</experiments>
</comment>
<comment type="subcellular location">
    <subcellularLocation>
        <location evidence="1">Cytoplasm</location>
    </subcellularLocation>
</comment>
<comment type="similarity">
    <text evidence="4">Belongs to the eukaryotic ribosomal protein eL30 family.</text>
</comment>
<sequence>MVAAKKTKKSLESINSRLQLVMKSGKYVLGYKQTLKMIRQGKAKLVILANNCPALRKSEIEYYAMLAKTGVHHYSGNNIELGTACGKYYRVCTLAIIDPGDSDIIRSMPEQTGEK</sequence>
<gene>
    <name type="primary">RPL30</name>
</gene>
<organism>
    <name type="scientific">Homo sapiens</name>
    <name type="common">Human</name>
    <dbReference type="NCBI Taxonomy" id="9606"/>
    <lineage>
        <taxon>Eukaryota</taxon>
        <taxon>Metazoa</taxon>
        <taxon>Chordata</taxon>
        <taxon>Craniata</taxon>
        <taxon>Vertebrata</taxon>
        <taxon>Euteleostomi</taxon>
        <taxon>Mammalia</taxon>
        <taxon>Eutheria</taxon>
        <taxon>Euarchontoglires</taxon>
        <taxon>Primates</taxon>
        <taxon>Haplorrhini</taxon>
        <taxon>Catarrhini</taxon>
        <taxon>Hominidae</taxon>
        <taxon>Homo</taxon>
    </lineage>
</organism>
<name>RL30_HUMAN</name>
<reference key="1">
    <citation type="submission" date="1994-05" db="EMBL/GenBank/DDBJ databases">
        <authorList>
            <person name="Filipenko M.L."/>
            <person name="Karpova G.G."/>
        </authorList>
    </citation>
    <scope>NUCLEOTIDE SEQUENCE [MRNA]</scope>
    <source>
        <tissue>Placenta</tissue>
    </source>
</reference>
<reference key="2">
    <citation type="submission" date="1998-05" db="EMBL/GenBank/DDBJ databases">
        <authorList>
            <person name="Bhat K.S."/>
        </authorList>
    </citation>
    <scope>NUCLEOTIDE SEQUENCE [MRNA]</scope>
</reference>
<reference key="3">
    <citation type="journal article" date="2002" name="Genome Res.">
        <title>The human ribosomal protein genes: sequencing and comparative analysis of 73 genes.</title>
        <authorList>
            <person name="Yoshihama M."/>
            <person name="Uechi T."/>
            <person name="Asakawa S."/>
            <person name="Kawasaki K."/>
            <person name="Kato S."/>
            <person name="Higa S."/>
            <person name="Maeda N."/>
            <person name="Minoshima S."/>
            <person name="Tanaka T."/>
            <person name="Shimizu N."/>
            <person name="Kenmochi N."/>
        </authorList>
    </citation>
    <scope>NUCLEOTIDE SEQUENCE [GENOMIC DNA]</scope>
</reference>
<reference key="4">
    <citation type="journal article" date="2004" name="Nat. Genet.">
        <title>Complete sequencing and characterization of 21,243 full-length human cDNAs.</title>
        <authorList>
            <person name="Ota T."/>
            <person name="Suzuki Y."/>
            <person name="Nishikawa T."/>
            <person name="Otsuki T."/>
            <person name="Sugiyama T."/>
            <person name="Irie R."/>
            <person name="Wakamatsu A."/>
            <person name="Hayashi K."/>
            <person name="Sato H."/>
            <person name="Nagai K."/>
            <person name="Kimura K."/>
            <person name="Makita H."/>
            <person name="Sekine M."/>
            <person name="Obayashi M."/>
            <person name="Nishi T."/>
            <person name="Shibahara T."/>
            <person name="Tanaka T."/>
            <person name="Ishii S."/>
            <person name="Yamamoto J."/>
            <person name="Saito K."/>
            <person name="Kawai Y."/>
            <person name="Isono Y."/>
            <person name="Nakamura Y."/>
            <person name="Nagahari K."/>
            <person name="Murakami K."/>
            <person name="Yasuda T."/>
            <person name="Iwayanagi T."/>
            <person name="Wagatsuma M."/>
            <person name="Shiratori A."/>
            <person name="Sudo H."/>
            <person name="Hosoiri T."/>
            <person name="Kaku Y."/>
            <person name="Kodaira H."/>
            <person name="Kondo H."/>
            <person name="Sugawara M."/>
            <person name="Takahashi M."/>
            <person name="Kanda K."/>
            <person name="Yokoi T."/>
            <person name="Furuya T."/>
            <person name="Kikkawa E."/>
            <person name="Omura Y."/>
            <person name="Abe K."/>
            <person name="Kamihara K."/>
            <person name="Katsuta N."/>
            <person name="Sato K."/>
            <person name="Tanikawa M."/>
            <person name="Yamazaki M."/>
            <person name="Ninomiya K."/>
            <person name="Ishibashi T."/>
            <person name="Yamashita H."/>
            <person name="Murakawa K."/>
            <person name="Fujimori K."/>
            <person name="Tanai H."/>
            <person name="Kimata M."/>
            <person name="Watanabe M."/>
            <person name="Hiraoka S."/>
            <person name="Chiba Y."/>
            <person name="Ishida S."/>
            <person name="Ono Y."/>
            <person name="Takiguchi S."/>
            <person name="Watanabe S."/>
            <person name="Yosida M."/>
            <person name="Hotuta T."/>
            <person name="Kusano J."/>
            <person name="Kanehori K."/>
            <person name="Takahashi-Fujii A."/>
            <person name="Hara H."/>
            <person name="Tanase T.-O."/>
            <person name="Nomura Y."/>
            <person name="Togiya S."/>
            <person name="Komai F."/>
            <person name="Hara R."/>
            <person name="Takeuchi K."/>
            <person name="Arita M."/>
            <person name="Imose N."/>
            <person name="Musashino K."/>
            <person name="Yuuki H."/>
            <person name="Oshima A."/>
            <person name="Sasaki N."/>
            <person name="Aotsuka S."/>
            <person name="Yoshikawa Y."/>
            <person name="Matsunawa H."/>
            <person name="Ichihara T."/>
            <person name="Shiohata N."/>
            <person name="Sano S."/>
            <person name="Moriya S."/>
            <person name="Momiyama H."/>
            <person name="Satoh N."/>
            <person name="Takami S."/>
            <person name="Terashima Y."/>
            <person name="Suzuki O."/>
            <person name="Nakagawa S."/>
            <person name="Senoh A."/>
            <person name="Mizoguchi H."/>
            <person name="Goto Y."/>
            <person name="Shimizu F."/>
            <person name="Wakebe H."/>
            <person name="Hishigaki H."/>
            <person name="Watanabe T."/>
            <person name="Sugiyama A."/>
            <person name="Takemoto M."/>
            <person name="Kawakami B."/>
            <person name="Yamazaki M."/>
            <person name="Watanabe K."/>
            <person name="Kumagai A."/>
            <person name="Itakura S."/>
            <person name="Fukuzumi Y."/>
            <person name="Fujimori Y."/>
            <person name="Komiyama M."/>
            <person name="Tashiro H."/>
            <person name="Tanigami A."/>
            <person name="Fujiwara T."/>
            <person name="Ono T."/>
            <person name="Yamada K."/>
            <person name="Fujii Y."/>
            <person name="Ozaki K."/>
            <person name="Hirao M."/>
            <person name="Ohmori Y."/>
            <person name="Kawabata A."/>
            <person name="Hikiji T."/>
            <person name="Kobatake N."/>
            <person name="Inagaki H."/>
            <person name="Ikema Y."/>
            <person name="Okamoto S."/>
            <person name="Okitani R."/>
            <person name="Kawakami T."/>
            <person name="Noguchi S."/>
            <person name="Itoh T."/>
            <person name="Shigeta K."/>
            <person name="Senba T."/>
            <person name="Matsumura K."/>
            <person name="Nakajima Y."/>
            <person name="Mizuno T."/>
            <person name="Morinaga M."/>
            <person name="Sasaki M."/>
            <person name="Togashi T."/>
            <person name="Oyama M."/>
            <person name="Hata H."/>
            <person name="Watanabe M."/>
            <person name="Komatsu T."/>
            <person name="Mizushima-Sugano J."/>
            <person name="Satoh T."/>
            <person name="Shirai Y."/>
            <person name="Takahashi Y."/>
            <person name="Nakagawa K."/>
            <person name="Okumura K."/>
            <person name="Nagase T."/>
            <person name="Nomura N."/>
            <person name="Kikuchi H."/>
            <person name="Masuho Y."/>
            <person name="Yamashita R."/>
            <person name="Nakai K."/>
            <person name="Yada T."/>
            <person name="Nakamura Y."/>
            <person name="Ohara O."/>
            <person name="Isogai T."/>
            <person name="Sugano S."/>
        </authorList>
    </citation>
    <scope>NUCLEOTIDE SEQUENCE [LARGE SCALE MRNA]</scope>
</reference>
<reference key="5">
    <citation type="submission" date="2005-07" db="EMBL/GenBank/DDBJ databases">
        <authorList>
            <person name="Mural R.J."/>
            <person name="Istrail S."/>
            <person name="Sutton G.G."/>
            <person name="Florea L."/>
            <person name="Halpern A.L."/>
            <person name="Mobarry C.M."/>
            <person name="Lippert R."/>
            <person name="Walenz B."/>
            <person name="Shatkay H."/>
            <person name="Dew I."/>
            <person name="Miller J.R."/>
            <person name="Flanigan M.J."/>
            <person name="Edwards N.J."/>
            <person name="Bolanos R."/>
            <person name="Fasulo D."/>
            <person name="Halldorsson B.V."/>
            <person name="Hannenhalli S."/>
            <person name="Turner R."/>
            <person name="Yooseph S."/>
            <person name="Lu F."/>
            <person name="Nusskern D.R."/>
            <person name="Shue B.C."/>
            <person name="Zheng X.H."/>
            <person name="Zhong F."/>
            <person name="Delcher A.L."/>
            <person name="Huson D.H."/>
            <person name="Kravitz S.A."/>
            <person name="Mouchard L."/>
            <person name="Reinert K."/>
            <person name="Remington K.A."/>
            <person name="Clark A.G."/>
            <person name="Waterman M.S."/>
            <person name="Eichler E.E."/>
            <person name="Adams M.D."/>
            <person name="Hunkapiller M.W."/>
            <person name="Myers E.W."/>
            <person name="Venter J.C."/>
        </authorList>
    </citation>
    <scope>NUCLEOTIDE SEQUENCE [LARGE SCALE GENOMIC DNA]</scope>
</reference>
<reference key="6">
    <citation type="journal article" date="2004" name="Genome Res.">
        <title>The status, quality, and expansion of the NIH full-length cDNA project: the Mammalian Gene Collection (MGC).</title>
        <authorList>
            <consortium name="The MGC Project Team"/>
        </authorList>
    </citation>
    <scope>NUCLEOTIDE SEQUENCE [LARGE SCALE MRNA]</scope>
    <source>
        <tissue>Embryonic stem cell</tissue>
        <tissue>Mammary gland</tissue>
    </source>
</reference>
<reference key="7">
    <citation type="journal article" date="2003" name="Nature">
        <title>Proteomic characterization of the human centrosome by protein correlation profiling.</title>
        <authorList>
            <person name="Andersen J.S."/>
            <person name="Wilkinson C.J."/>
            <person name="Mayor T."/>
            <person name="Mortensen P."/>
            <person name="Nigg E.A."/>
            <person name="Mann M."/>
        </authorList>
    </citation>
    <scope>IDENTIFICATION BY MASS SPECTROMETRY</scope>
    <source>
        <tissue>Lymphoblast</tissue>
    </source>
</reference>
<reference key="8">
    <citation type="journal article" date="2008" name="Proc. Natl. Acad. Sci. U.S.A.">
        <title>A quantitative atlas of mitotic phosphorylation.</title>
        <authorList>
            <person name="Dephoure N."/>
            <person name="Zhou C."/>
            <person name="Villen J."/>
            <person name="Beausoleil S.A."/>
            <person name="Bakalarski C.E."/>
            <person name="Elledge S.J."/>
            <person name="Gygi S.P."/>
        </authorList>
    </citation>
    <scope>PHOSPHORYLATION [LARGE SCALE ANALYSIS] AT SER-10</scope>
    <scope>IDENTIFICATION BY MASS SPECTROMETRY [LARGE SCALE ANALYSIS]</scope>
    <source>
        <tissue>Cervix carcinoma</tissue>
    </source>
</reference>
<reference key="9">
    <citation type="journal article" date="2009" name="Science">
        <title>Lysine acetylation targets protein complexes and co-regulates major cellular functions.</title>
        <authorList>
            <person name="Choudhary C."/>
            <person name="Kumar C."/>
            <person name="Gnad F."/>
            <person name="Nielsen M.L."/>
            <person name="Rehman M."/>
            <person name="Walther T.C."/>
            <person name="Olsen J.V."/>
            <person name="Mann M."/>
        </authorList>
    </citation>
    <scope>ACETYLATION [LARGE SCALE ANALYSIS] AT LYS-26</scope>
    <scope>IDENTIFICATION BY MASS SPECTROMETRY [LARGE SCALE ANALYSIS]</scope>
</reference>
<reference key="10">
    <citation type="journal article" date="2010" name="Sci. Signal.">
        <title>Quantitative phosphoproteomics reveals widespread full phosphorylation site occupancy during mitosis.</title>
        <authorList>
            <person name="Olsen J.V."/>
            <person name="Vermeulen M."/>
            <person name="Santamaria A."/>
            <person name="Kumar C."/>
            <person name="Miller M.L."/>
            <person name="Jensen L.J."/>
            <person name="Gnad F."/>
            <person name="Cox J."/>
            <person name="Jensen T.S."/>
            <person name="Nigg E.A."/>
            <person name="Brunak S."/>
            <person name="Mann M."/>
        </authorList>
    </citation>
    <scope>PHOSPHORYLATION [LARGE SCALE ANALYSIS] AT SER-10</scope>
    <scope>IDENTIFICATION BY MASS SPECTROMETRY [LARGE SCALE ANALYSIS]</scope>
    <source>
        <tissue>Cervix carcinoma</tissue>
    </source>
</reference>
<reference key="11">
    <citation type="journal article" date="2011" name="BMC Syst. Biol.">
        <title>Initial characterization of the human central proteome.</title>
        <authorList>
            <person name="Burkard T.R."/>
            <person name="Planyavsky M."/>
            <person name="Kaupe I."/>
            <person name="Breitwieser F.P."/>
            <person name="Buerckstuemmer T."/>
            <person name="Bennett K.L."/>
            <person name="Superti-Furga G."/>
            <person name="Colinge J."/>
        </authorList>
    </citation>
    <scope>IDENTIFICATION BY MASS SPECTROMETRY [LARGE SCALE ANALYSIS]</scope>
</reference>
<reference key="12">
    <citation type="journal article" date="2011" name="Sci. Signal.">
        <title>System-wide temporal characterization of the proteome and phosphoproteome of human embryonic stem cell differentiation.</title>
        <authorList>
            <person name="Rigbolt K.T."/>
            <person name="Prokhorova T.A."/>
            <person name="Akimov V."/>
            <person name="Henningsen J."/>
            <person name="Johansen P.T."/>
            <person name="Kratchmarova I."/>
            <person name="Kassem M."/>
            <person name="Mann M."/>
            <person name="Olsen J.V."/>
            <person name="Blagoev B."/>
        </authorList>
    </citation>
    <scope>PHOSPHORYLATION [LARGE SCALE ANALYSIS] AT SER-10</scope>
    <scope>IDENTIFICATION BY MASS SPECTROMETRY [LARGE SCALE ANALYSIS]</scope>
</reference>
<reference key="13">
    <citation type="journal article" date="2012" name="Proc. Natl. Acad. Sci. U.S.A.">
        <title>N-terminal acetylome analyses and functional insights of the N-terminal acetyltransferase NatB.</title>
        <authorList>
            <person name="Van Damme P."/>
            <person name="Lasa M."/>
            <person name="Polevoda B."/>
            <person name="Gazquez C."/>
            <person name="Elosegui-Artola A."/>
            <person name="Kim D.S."/>
            <person name="De Juan-Pardo E."/>
            <person name="Demeyer K."/>
            <person name="Hole K."/>
            <person name="Larrea E."/>
            <person name="Timmerman E."/>
            <person name="Prieto J."/>
            <person name="Arnesen T."/>
            <person name="Sherman F."/>
            <person name="Gevaert K."/>
            <person name="Aldabe R."/>
        </authorList>
    </citation>
    <scope>IDENTIFICATION BY MASS SPECTROMETRY [LARGE SCALE ANALYSIS]</scope>
</reference>
<reference key="14">
    <citation type="journal article" date="2013" name="J. Proteome Res.">
        <title>Toward a comprehensive characterization of a human cancer cell phosphoproteome.</title>
        <authorList>
            <person name="Zhou H."/>
            <person name="Di Palma S."/>
            <person name="Preisinger C."/>
            <person name="Peng M."/>
            <person name="Polat A.N."/>
            <person name="Heck A.J."/>
            <person name="Mohammed S."/>
        </authorList>
    </citation>
    <scope>PHOSPHORYLATION [LARGE SCALE ANALYSIS] AT SER-10 AND SER-16</scope>
    <scope>IDENTIFICATION BY MASS SPECTROMETRY [LARGE SCALE ANALYSIS]</scope>
    <source>
        <tissue>Cervix carcinoma</tissue>
        <tissue>Erythroleukemia</tissue>
    </source>
</reference>
<reference key="15">
    <citation type="journal article" date="2014" name="Curr. Opin. Struct. Biol.">
        <title>A new system for naming ribosomal proteins.</title>
        <authorList>
            <person name="Ban N."/>
            <person name="Beckmann R."/>
            <person name="Cate J.H.D."/>
            <person name="Dinman J.D."/>
            <person name="Dragon F."/>
            <person name="Ellis S.R."/>
            <person name="Lafontaine D.L.J."/>
            <person name="Lindahl L."/>
            <person name="Liljas A."/>
            <person name="Lipton J.M."/>
            <person name="McAlear M.A."/>
            <person name="Moore P.B."/>
            <person name="Noller H.F."/>
            <person name="Ortega J."/>
            <person name="Panse V.G."/>
            <person name="Ramakrishnan V."/>
            <person name="Spahn C.M.T."/>
            <person name="Steitz T.A."/>
            <person name="Tchorzewski M."/>
            <person name="Tollervey D."/>
            <person name="Warren A.J."/>
            <person name="Williamson J.R."/>
            <person name="Wilson D."/>
            <person name="Yonath A."/>
            <person name="Yusupov M."/>
        </authorList>
    </citation>
    <scope>NOMENCLATURE</scope>
</reference>
<reference key="16">
    <citation type="journal article" date="2014" name="J. Proteomics">
        <title>An enzyme assisted RP-RPLC approach for in-depth analysis of human liver phosphoproteome.</title>
        <authorList>
            <person name="Bian Y."/>
            <person name="Song C."/>
            <person name="Cheng K."/>
            <person name="Dong M."/>
            <person name="Wang F."/>
            <person name="Huang J."/>
            <person name="Sun D."/>
            <person name="Wang L."/>
            <person name="Ye M."/>
            <person name="Zou H."/>
        </authorList>
    </citation>
    <scope>IDENTIFICATION BY MASS SPECTROMETRY [LARGE SCALE ANALYSIS]</scope>
    <source>
        <tissue>Liver</tissue>
    </source>
</reference>
<reference key="17">
    <citation type="journal article" date="2015" name="Proteomics">
        <title>N-terminome analysis of the human mitochondrial proteome.</title>
        <authorList>
            <person name="Vaca Jacome A.S."/>
            <person name="Rabilloud T."/>
            <person name="Schaeffer-Reiss C."/>
            <person name="Rompais M."/>
            <person name="Ayoub D."/>
            <person name="Lane L."/>
            <person name="Bairoch A."/>
            <person name="Van Dorsselaer A."/>
            <person name="Carapito C."/>
        </authorList>
    </citation>
    <scope>IDENTIFICATION BY MASS SPECTROMETRY [LARGE SCALE ANALYSIS]</scope>
</reference>
<reference key="18">
    <citation type="journal article" date="2017" name="Nat. Struct. Mol. Biol.">
        <title>Site-specific mapping of the human SUMO proteome reveals co-modification with phosphorylation.</title>
        <authorList>
            <person name="Hendriks I.A."/>
            <person name="Lyon D."/>
            <person name="Young C."/>
            <person name="Jensen L.J."/>
            <person name="Vertegaal A.C."/>
            <person name="Nielsen M.L."/>
        </authorList>
    </citation>
    <scope>SUMOYLATION [LARGE SCALE ANALYSIS] AT LYS-26</scope>
    <scope>IDENTIFICATION BY MASS SPECTROMETRY [LARGE SCALE ANALYSIS]</scope>
</reference>
<reference key="19">
    <citation type="journal article" date="2011" name="Acta Crystallogr. F">
        <title>Crystallization and preliminary X-ray structure analysis of human ribosomal protein L30e.</title>
        <authorList>
            <person name="Kawaguchi A."/>
            <person name="Ose T."/>
            <person name="Yao M."/>
            <person name="Tanaka I."/>
        </authorList>
    </citation>
    <scope>X-RAY CRYSTALLOGRAPHY (1.59 ANGSTROMS)</scope>
</reference>
<reference key="20">
    <citation type="journal article" date="2013" name="Nature">
        <title>Structures of the human and Drosophila 80S ribosome.</title>
        <authorList>
            <person name="Anger A.M."/>
            <person name="Armache J.P."/>
            <person name="Berninghausen O."/>
            <person name="Habeck M."/>
            <person name="Subklewe M."/>
            <person name="Wilson D.N."/>
            <person name="Beckmann R."/>
        </authorList>
    </citation>
    <scope>STRUCTURE BY ELECTRON MICROSCOPY (5.0 ANGSTROMS)</scope>
    <scope>FUNCTION</scope>
    <scope>SUBUNIT</scope>
    <scope>SUBCELLULAR LOCATION</scope>
</reference>
<reference evidence="5 6 7 8" key="21">
    <citation type="journal article" date="2020" name="Nat. Commun.">
        <title>Structural snapshots of human pre-60S ribosomal particles before and after nuclear export.</title>
        <authorList>
            <person name="Liang X."/>
            <person name="Zuo M.Q."/>
            <person name="Zhang Y."/>
            <person name="Li N."/>
            <person name="Ma C."/>
            <person name="Dong M.Q."/>
            <person name="Gao N."/>
        </authorList>
    </citation>
    <scope>STRUCTURE BY ELECTRON MICROSCOPY (3.09 ANGSTROMS)</scope>
    <scope>FUNCTION</scope>
    <scope>SUBUNIT</scope>
</reference>
<keyword id="KW-0002">3D-structure</keyword>
<keyword id="KW-0007">Acetylation</keyword>
<keyword id="KW-0963">Cytoplasm</keyword>
<keyword id="KW-1017">Isopeptide bond</keyword>
<keyword id="KW-0597">Phosphoprotein</keyword>
<keyword id="KW-1267">Proteomics identification</keyword>
<keyword id="KW-1185">Reference proteome</keyword>
<keyword id="KW-0687">Ribonucleoprotein</keyword>
<keyword id="KW-0689">Ribosomal protein</keyword>
<keyword id="KW-0832">Ubl conjugation</keyword>
<feature type="chain" id="PRO_0000146120" description="Large ribosomal subunit protein eL30">
    <location>
        <begin position="1"/>
        <end position="115"/>
    </location>
</feature>
<feature type="modified residue" description="Phosphoserine" evidence="9 11 12 13">
    <location>
        <position position="10"/>
    </location>
</feature>
<feature type="modified residue" description="Phosphoserine" evidence="13">
    <location>
        <position position="16"/>
    </location>
</feature>
<feature type="modified residue" description="N6-acetyllysine; alternate" evidence="10">
    <location>
        <position position="26"/>
    </location>
</feature>
<feature type="cross-link" description="Glycyl lysine isopeptide (Lys-Gly) (interchain with G-Cter in SUMO2); alternate" evidence="14">
    <location>
        <position position="26"/>
    </location>
</feature>
<feature type="helix" evidence="15">
    <location>
        <begin position="15"/>
        <end position="24"/>
    </location>
</feature>
<feature type="strand" evidence="15">
    <location>
        <begin position="25"/>
        <end position="30"/>
    </location>
</feature>
<feature type="helix" evidence="15">
    <location>
        <begin position="31"/>
        <end position="39"/>
    </location>
</feature>
<feature type="strand" evidence="15">
    <location>
        <begin position="44"/>
        <end position="48"/>
    </location>
</feature>
<feature type="helix" evidence="15">
    <location>
        <begin position="54"/>
        <end position="66"/>
    </location>
</feature>
<feature type="strand" evidence="15">
    <location>
        <begin position="70"/>
        <end position="73"/>
    </location>
</feature>
<feature type="helix" evidence="15">
    <location>
        <begin position="78"/>
        <end position="84"/>
    </location>
</feature>
<feature type="strand" evidence="15">
    <location>
        <begin position="93"/>
        <end position="98"/>
    </location>
</feature>
<dbReference type="EMBL" id="L05095">
    <property type="protein sequence ID" value="AAC15858.1"/>
    <property type="molecule type" value="mRNA"/>
</dbReference>
<dbReference type="EMBL" id="X79238">
    <property type="protein sequence ID" value="CAA55820.1"/>
    <property type="molecule type" value="mRNA"/>
</dbReference>
<dbReference type="EMBL" id="AB070559">
    <property type="protein sequence ID" value="BAB79491.1"/>
    <property type="molecule type" value="Genomic_DNA"/>
</dbReference>
<dbReference type="EMBL" id="AK312102">
    <property type="protein sequence ID" value="BAG35038.1"/>
    <property type="molecule type" value="mRNA"/>
</dbReference>
<dbReference type="EMBL" id="CH471060">
    <property type="protein sequence ID" value="EAW91770.1"/>
    <property type="molecule type" value="Genomic_DNA"/>
</dbReference>
<dbReference type="EMBL" id="BC032700">
    <property type="protein sequence ID" value="AAH32700.1"/>
    <property type="molecule type" value="mRNA"/>
</dbReference>
<dbReference type="EMBL" id="BC095426">
    <property type="protein sequence ID" value="AAH95426.1"/>
    <property type="molecule type" value="mRNA"/>
</dbReference>
<dbReference type="CCDS" id="CCDS34928.1"/>
<dbReference type="PIR" id="S45004">
    <property type="entry name" value="S45004"/>
</dbReference>
<dbReference type="RefSeq" id="NP_000980.1">
    <property type="nucleotide sequence ID" value="NM_000989.4"/>
</dbReference>
<dbReference type="PDB" id="3VI6">
    <property type="method" value="X-ray"/>
    <property type="resolution" value="1.59 A"/>
    <property type="chains" value="A=1-115"/>
</dbReference>
<dbReference type="PDB" id="4UG0">
    <property type="method" value="EM"/>
    <property type="chains" value="Lc=1-115"/>
</dbReference>
<dbReference type="PDB" id="4V6X">
    <property type="method" value="EM"/>
    <property type="resolution" value="5.00 A"/>
    <property type="chains" value="Cc=1-115"/>
</dbReference>
<dbReference type="PDB" id="5AJ0">
    <property type="method" value="EM"/>
    <property type="resolution" value="3.50 A"/>
    <property type="chains" value="Ac=1-115"/>
</dbReference>
<dbReference type="PDB" id="5LKS">
    <property type="method" value="EM"/>
    <property type="resolution" value="3.60 A"/>
    <property type="chains" value="Lc=1-115"/>
</dbReference>
<dbReference type="PDB" id="5T2C">
    <property type="method" value="EM"/>
    <property type="resolution" value="3.60 A"/>
    <property type="chains" value="W=1-115"/>
</dbReference>
<dbReference type="PDB" id="6IP5">
    <property type="method" value="EM"/>
    <property type="resolution" value="3.90 A"/>
    <property type="chains" value="2W=1-115"/>
</dbReference>
<dbReference type="PDB" id="6IP6">
    <property type="method" value="EM"/>
    <property type="resolution" value="4.50 A"/>
    <property type="chains" value="2W=1-115"/>
</dbReference>
<dbReference type="PDB" id="6IP8">
    <property type="method" value="EM"/>
    <property type="resolution" value="3.90 A"/>
    <property type="chains" value="2W=1-115"/>
</dbReference>
<dbReference type="PDB" id="6LQM">
    <property type="method" value="EM"/>
    <property type="resolution" value="3.09 A"/>
    <property type="chains" value="E=1-115"/>
</dbReference>
<dbReference type="PDB" id="6LSR">
    <property type="method" value="EM"/>
    <property type="resolution" value="3.13 A"/>
    <property type="chains" value="E=1-115"/>
</dbReference>
<dbReference type="PDB" id="6LSS">
    <property type="method" value="EM"/>
    <property type="resolution" value="3.23 A"/>
    <property type="chains" value="E=1-115"/>
</dbReference>
<dbReference type="PDB" id="6LU8">
    <property type="method" value="EM"/>
    <property type="resolution" value="3.13 A"/>
    <property type="chains" value="E=1-115"/>
</dbReference>
<dbReference type="PDB" id="6OLE">
    <property type="method" value="EM"/>
    <property type="resolution" value="3.10 A"/>
    <property type="chains" value="d=7-109"/>
</dbReference>
<dbReference type="PDB" id="6OLF">
    <property type="method" value="EM"/>
    <property type="resolution" value="3.90 A"/>
    <property type="chains" value="d=7-109"/>
</dbReference>
<dbReference type="PDB" id="6OLG">
    <property type="method" value="EM"/>
    <property type="resolution" value="3.40 A"/>
    <property type="chains" value="Ac=7-109"/>
</dbReference>
<dbReference type="PDB" id="6OLI">
    <property type="method" value="EM"/>
    <property type="resolution" value="3.50 A"/>
    <property type="chains" value="d=7-109"/>
</dbReference>
<dbReference type="PDB" id="6OLZ">
    <property type="method" value="EM"/>
    <property type="resolution" value="3.90 A"/>
    <property type="chains" value="Ac=7-109"/>
</dbReference>
<dbReference type="PDB" id="6OM0">
    <property type="method" value="EM"/>
    <property type="resolution" value="3.10 A"/>
    <property type="chains" value="d=7-109"/>
</dbReference>
<dbReference type="PDB" id="6OM7">
    <property type="method" value="EM"/>
    <property type="resolution" value="3.70 A"/>
    <property type="chains" value="d=7-109"/>
</dbReference>
<dbReference type="PDB" id="6QZP">
    <property type="method" value="EM"/>
    <property type="resolution" value="2.90 A"/>
    <property type="chains" value="Lc=9-106"/>
</dbReference>
<dbReference type="PDB" id="6W6L">
    <property type="method" value="EM"/>
    <property type="resolution" value="3.84 A"/>
    <property type="chains" value="d=1-115"/>
</dbReference>
<dbReference type="PDB" id="6XA1">
    <property type="method" value="EM"/>
    <property type="resolution" value="2.80 A"/>
    <property type="chains" value="Lc=9-106"/>
</dbReference>
<dbReference type="PDB" id="6Y0G">
    <property type="method" value="EM"/>
    <property type="resolution" value="3.20 A"/>
    <property type="chains" value="Lc=1-115"/>
</dbReference>
<dbReference type="PDB" id="6Y2L">
    <property type="method" value="EM"/>
    <property type="resolution" value="3.00 A"/>
    <property type="chains" value="Lc=1-115"/>
</dbReference>
<dbReference type="PDB" id="6Y57">
    <property type="method" value="EM"/>
    <property type="resolution" value="3.50 A"/>
    <property type="chains" value="Lc=1-115"/>
</dbReference>
<dbReference type="PDB" id="6Y6X">
    <property type="method" value="EM"/>
    <property type="resolution" value="2.80 A"/>
    <property type="chains" value="Lc=9-106"/>
</dbReference>
<dbReference type="PDB" id="6Z6L">
    <property type="method" value="EM"/>
    <property type="resolution" value="3.00 A"/>
    <property type="chains" value="Lc=1-115"/>
</dbReference>
<dbReference type="PDB" id="6Z6M">
    <property type="method" value="EM"/>
    <property type="resolution" value="3.10 A"/>
    <property type="chains" value="Lc=1-115"/>
</dbReference>
<dbReference type="PDB" id="6Z6N">
    <property type="method" value="EM"/>
    <property type="resolution" value="2.90 A"/>
    <property type="chains" value="Lc=1-115"/>
</dbReference>
<dbReference type="PDB" id="6ZM7">
    <property type="method" value="EM"/>
    <property type="resolution" value="2.70 A"/>
    <property type="chains" value="Lc=1-115"/>
</dbReference>
<dbReference type="PDB" id="6ZME">
    <property type="method" value="EM"/>
    <property type="resolution" value="3.00 A"/>
    <property type="chains" value="Lc=1-115"/>
</dbReference>
<dbReference type="PDB" id="6ZMI">
    <property type="method" value="EM"/>
    <property type="resolution" value="2.60 A"/>
    <property type="chains" value="Lc=1-115"/>
</dbReference>
<dbReference type="PDB" id="6ZMO">
    <property type="method" value="EM"/>
    <property type="resolution" value="3.10 A"/>
    <property type="chains" value="Lc=1-115"/>
</dbReference>
<dbReference type="PDB" id="7BHP">
    <property type="method" value="EM"/>
    <property type="resolution" value="3.30 A"/>
    <property type="chains" value="Lc=1-115"/>
</dbReference>
<dbReference type="PDB" id="7F5S">
    <property type="method" value="EM"/>
    <property type="resolution" value="2.72 A"/>
    <property type="chains" value="Lc=1-115"/>
</dbReference>
<dbReference type="PDB" id="7OW7">
    <property type="method" value="EM"/>
    <property type="resolution" value="2.20 A"/>
    <property type="chains" value="W=1-115"/>
</dbReference>
<dbReference type="PDB" id="7QVP">
    <property type="method" value="EM"/>
    <property type="resolution" value="3.00 A"/>
    <property type="chains" value="Lc/Mc=1-115"/>
</dbReference>
<dbReference type="PDB" id="7XNX">
    <property type="method" value="EM"/>
    <property type="resolution" value="2.70 A"/>
    <property type="chains" value="Lc=1-115"/>
</dbReference>
<dbReference type="PDB" id="7XNY">
    <property type="method" value="EM"/>
    <property type="resolution" value="2.50 A"/>
    <property type="chains" value="Lc=1-115"/>
</dbReference>
<dbReference type="PDB" id="8A3D">
    <property type="method" value="EM"/>
    <property type="resolution" value="1.67 A"/>
    <property type="chains" value="W=1-115"/>
</dbReference>
<dbReference type="PDB" id="8FKY">
    <property type="method" value="EM"/>
    <property type="resolution" value="2.67 A"/>
    <property type="chains" value="LO=1-115"/>
</dbReference>
<dbReference type="PDB" id="8FKZ">
    <property type="method" value="EM"/>
    <property type="resolution" value="3.04 A"/>
    <property type="chains" value="LO=1-115"/>
</dbReference>
<dbReference type="PDB" id="8FL2">
    <property type="method" value="EM"/>
    <property type="resolution" value="2.67 A"/>
    <property type="chains" value="LO=1-115"/>
</dbReference>
<dbReference type="PDB" id="8FL3">
    <property type="method" value="EM"/>
    <property type="resolution" value="2.53 A"/>
    <property type="chains" value="LO=1-115"/>
</dbReference>
<dbReference type="PDB" id="8FL4">
    <property type="method" value="EM"/>
    <property type="resolution" value="2.89 A"/>
    <property type="chains" value="LO=1-115"/>
</dbReference>
<dbReference type="PDB" id="8FL6">
    <property type="method" value="EM"/>
    <property type="resolution" value="2.62 A"/>
    <property type="chains" value="LO=1-115"/>
</dbReference>
<dbReference type="PDB" id="8FL7">
    <property type="method" value="EM"/>
    <property type="resolution" value="2.55 A"/>
    <property type="chains" value="LO=1-115"/>
</dbReference>
<dbReference type="PDB" id="8FL9">
    <property type="method" value="EM"/>
    <property type="resolution" value="2.75 A"/>
    <property type="chains" value="LO=1-115"/>
</dbReference>
<dbReference type="PDB" id="8FLA">
    <property type="method" value="EM"/>
    <property type="resolution" value="2.63 A"/>
    <property type="chains" value="LO=1-115"/>
</dbReference>
<dbReference type="PDB" id="8FLB">
    <property type="method" value="EM"/>
    <property type="resolution" value="2.55 A"/>
    <property type="chains" value="LO=1-115"/>
</dbReference>
<dbReference type="PDB" id="8FLC">
    <property type="method" value="EM"/>
    <property type="resolution" value="2.76 A"/>
    <property type="chains" value="LO=1-115"/>
</dbReference>
<dbReference type="PDB" id="8FLD">
    <property type="method" value="EM"/>
    <property type="resolution" value="2.58 A"/>
    <property type="chains" value="LO=1-115"/>
</dbReference>
<dbReference type="PDB" id="8FLE">
    <property type="method" value="EM"/>
    <property type="resolution" value="2.48 A"/>
    <property type="chains" value="LO=1-115"/>
</dbReference>
<dbReference type="PDB" id="8FLF">
    <property type="method" value="EM"/>
    <property type="resolution" value="2.65 A"/>
    <property type="chains" value="LO=1-115"/>
</dbReference>
<dbReference type="PDB" id="8G5Y">
    <property type="method" value="EM"/>
    <property type="resolution" value="2.29 A"/>
    <property type="chains" value="Lc=1-115"/>
</dbReference>
<dbReference type="PDB" id="8G5Z">
    <property type="method" value="EM"/>
    <property type="resolution" value="2.64 A"/>
    <property type="chains" value="Lc=9-106"/>
</dbReference>
<dbReference type="PDB" id="8G60">
    <property type="method" value="EM"/>
    <property type="resolution" value="2.54 A"/>
    <property type="chains" value="Lc=1-115"/>
</dbReference>
<dbReference type="PDB" id="8G61">
    <property type="method" value="EM"/>
    <property type="resolution" value="2.94 A"/>
    <property type="chains" value="Lc=1-115"/>
</dbReference>
<dbReference type="PDB" id="8G6J">
    <property type="method" value="EM"/>
    <property type="resolution" value="2.80 A"/>
    <property type="chains" value="Lc=1-115"/>
</dbReference>
<dbReference type="PDB" id="8GLP">
    <property type="method" value="EM"/>
    <property type="resolution" value="1.67 A"/>
    <property type="chains" value="Lc=1-115"/>
</dbReference>
<dbReference type="PDB" id="8IDT">
    <property type="method" value="EM"/>
    <property type="resolution" value="2.80 A"/>
    <property type="chains" value="E=1-115"/>
</dbReference>
<dbReference type="PDB" id="8IDY">
    <property type="method" value="EM"/>
    <property type="resolution" value="3.00 A"/>
    <property type="chains" value="E=1-115"/>
</dbReference>
<dbReference type="PDB" id="8IE3">
    <property type="method" value="EM"/>
    <property type="resolution" value="3.30 A"/>
    <property type="chains" value="E=1-115"/>
</dbReference>
<dbReference type="PDB" id="8IFD">
    <property type="method" value="EM"/>
    <property type="resolution" value="2.59 A"/>
    <property type="chains" value="2W=1-115"/>
</dbReference>
<dbReference type="PDB" id="8IFE">
    <property type="method" value="EM"/>
    <property type="resolution" value="2.57 A"/>
    <property type="chains" value="2W=1-115"/>
</dbReference>
<dbReference type="PDB" id="8INE">
    <property type="method" value="EM"/>
    <property type="resolution" value="3.20 A"/>
    <property type="chains" value="E=1-115"/>
</dbReference>
<dbReference type="PDB" id="8INF">
    <property type="method" value="EM"/>
    <property type="resolution" value="3.00 A"/>
    <property type="chains" value="E=1-115"/>
</dbReference>
<dbReference type="PDB" id="8INK">
    <property type="method" value="EM"/>
    <property type="resolution" value="3.20 A"/>
    <property type="chains" value="E=1-115"/>
</dbReference>
<dbReference type="PDB" id="8IPD">
    <property type="method" value="EM"/>
    <property type="resolution" value="3.20 A"/>
    <property type="chains" value="E=1-115"/>
</dbReference>
<dbReference type="PDB" id="8IPX">
    <property type="method" value="EM"/>
    <property type="resolution" value="4.30 A"/>
    <property type="chains" value="E=1-115"/>
</dbReference>
<dbReference type="PDB" id="8IPY">
    <property type="method" value="EM"/>
    <property type="resolution" value="3.20 A"/>
    <property type="chains" value="E=1-115"/>
</dbReference>
<dbReference type="PDB" id="8IR1">
    <property type="method" value="EM"/>
    <property type="resolution" value="3.30 A"/>
    <property type="chains" value="E=1-115"/>
</dbReference>
<dbReference type="PDB" id="8IR3">
    <property type="method" value="EM"/>
    <property type="resolution" value="3.50 A"/>
    <property type="chains" value="E=1-115"/>
</dbReference>
<dbReference type="PDB" id="8JDJ">
    <property type="method" value="EM"/>
    <property type="resolution" value="2.50 A"/>
    <property type="chains" value="h=1-115"/>
</dbReference>
<dbReference type="PDB" id="8JDK">
    <property type="method" value="EM"/>
    <property type="resolution" value="2.26 A"/>
    <property type="chains" value="h=1-115"/>
</dbReference>
<dbReference type="PDB" id="8JDL">
    <property type="method" value="EM"/>
    <property type="resolution" value="2.42 A"/>
    <property type="chains" value="h=1-115"/>
</dbReference>
<dbReference type="PDB" id="8JDM">
    <property type="method" value="EM"/>
    <property type="resolution" value="2.67 A"/>
    <property type="chains" value="h=1-115"/>
</dbReference>
<dbReference type="PDB" id="8K2C">
    <property type="method" value="EM"/>
    <property type="resolution" value="2.40 A"/>
    <property type="chains" value="Lc=1-115"/>
</dbReference>
<dbReference type="PDB" id="8OHD">
    <property type="method" value="EM"/>
    <property type="resolution" value="3.10 A"/>
    <property type="chains" value="Lc=1-115"/>
</dbReference>
<dbReference type="PDB" id="8OJ0">
    <property type="method" value="EM"/>
    <property type="resolution" value="3.30 A"/>
    <property type="chains" value="Lc=1-115"/>
</dbReference>
<dbReference type="PDB" id="8OJ5">
    <property type="method" value="EM"/>
    <property type="resolution" value="2.90 A"/>
    <property type="chains" value="Lc=1-115"/>
</dbReference>
<dbReference type="PDB" id="8OJ8">
    <property type="method" value="EM"/>
    <property type="resolution" value="3.30 A"/>
    <property type="chains" value="Lc=1-115"/>
</dbReference>
<dbReference type="PDB" id="8QFD">
    <property type="method" value="EM"/>
    <property type="resolution" value="2.20 A"/>
    <property type="chains" value="c=1-115"/>
</dbReference>
<dbReference type="PDB" id="8QOI">
    <property type="method" value="EM"/>
    <property type="resolution" value="1.90 A"/>
    <property type="chains" value="Lc=1-115"/>
</dbReference>
<dbReference type="PDB" id="8QYX">
    <property type="method" value="EM"/>
    <property type="resolution" value="1.78 A"/>
    <property type="chains" value="W1=1-115"/>
</dbReference>
<dbReference type="PDB" id="8RL2">
    <property type="method" value="EM"/>
    <property type="resolution" value="2.84 A"/>
    <property type="chains" value="Lc=1-115"/>
</dbReference>
<dbReference type="PDB" id="8UKB">
    <property type="method" value="EM"/>
    <property type="resolution" value="3.05 A"/>
    <property type="chains" value="Lc=9-106"/>
</dbReference>
<dbReference type="PDB" id="8XSX">
    <property type="method" value="EM"/>
    <property type="resolution" value="2.40 A"/>
    <property type="chains" value="Lc=1-115"/>
</dbReference>
<dbReference type="PDB" id="8XSY">
    <property type="method" value="EM"/>
    <property type="resolution" value="3.00 A"/>
    <property type="chains" value="Lc=1-115"/>
</dbReference>
<dbReference type="PDB" id="8XSZ">
    <property type="method" value="EM"/>
    <property type="resolution" value="3.20 A"/>
    <property type="chains" value="Lc=1-115"/>
</dbReference>
<dbReference type="PDB" id="8Y0W">
    <property type="method" value="EM"/>
    <property type="resolution" value="3.40 A"/>
    <property type="chains" value="Lc=1-115"/>
</dbReference>
<dbReference type="PDB" id="8Y0X">
    <property type="method" value="EM"/>
    <property type="resolution" value="3.30 A"/>
    <property type="chains" value="Lc=1-115"/>
</dbReference>
<dbReference type="PDB" id="8YOO">
    <property type="method" value="EM"/>
    <property type="resolution" value="2.00 A"/>
    <property type="chains" value="Lc=1-115"/>
</dbReference>
<dbReference type="PDB" id="8YOP">
    <property type="method" value="EM"/>
    <property type="resolution" value="2.20 A"/>
    <property type="chains" value="Lc=1-115"/>
</dbReference>
<dbReference type="PDB" id="9C3H">
    <property type="method" value="EM"/>
    <property type="resolution" value="2.00 A"/>
    <property type="chains" value="Lc=1-115"/>
</dbReference>
<dbReference type="PDB" id="9G8M">
    <property type="method" value="EM"/>
    <property type="resolution" value="3.30 A"/>
    <property type="chains" value="Lc=1-115"/>
</dbReference>
<dbReference type="PDB" id="9GMO">
    <property type="method" value="EM"/>
    <property type="resolution" value="2.59 A"/>
    <property type="chains" value="W=1-115"/>
</dbReference>
<dbReference type="PDBsum" id="3VI6"/>
<dbReference type="PDBsum" id="4UG0"/>
<dbReference type="PDBsum" id="4V6X"/>
<dbReference type="PDBsum" id="5AJ0"/>
<dbReference type="PDBsum" id="5LKS"/>
<dbReference type="PDBsum" id="5T2C"/>
<dbReference type="PDBsum" id="6IP5"/>
<dbReference type="PDBsum" id="6IP6"/>
<dbReference type="PDBsum" id="6IP8"/>
<dbReference type="PDBsum" id="6LQM"/>
<dbReference type="PDBsum" id="6LSR"/>
<dbReference type="PDBsum" id="6LSS"/>
<dbReference type="PDBsum" id="6LU8"/>
<dbReference type="PDBsum" id="6OLE"/>
<dbReference type="PDBsum" id="6OLF"/>
<dbReference type="PDBsum" id="6OLG"/>
<dbReference type="PDBsum" id="6OLI"/>
<dbReference type="PDBsum" id="6OLZ"/>
<dbReference type="PDBsum" id="6OM0"/>
<dbReference type="PDBsum" id="6OM7"/>
<dbReference type="PDBsum" id="6QZP"/>
<dbReference type="PDBsum" id="6W6L"/>
<dbReference type="PDBsum" id="6XA1"/>
<dbReference type="PDBsum" id="6Y0G"/>
<dbReference type="PDBsum" id="6Y2L"/>
<dbReference type="PDBsum" id="6Y57"/>
<dbReference type="PDBsum" id="6Y6X"/>
<dbReference type="PDBsum" id="6Z6L"/>
<dbReference type="PDBsum" id="6Z6M"/>
<dbReference type="PDBsum" id="6Z6N"/>
<dbReference type="PDBsum" id="6ZM7"/>
<dbReference type="PDBsum" id="6ZME"/>
<dbReference type="PDBsum" id="6ZMI"/>
<dbReference type="PDBsum" id="6ZMO"/>
<dbReference type="PDBsum" id="7BHP"/>
<dbReference type="PDBsum" id="7F5S"/>
<dbReference type="PDBsum" id="7OW7"/>
<dbReference type="PDBsum" id="7QVP"/>
<dbReference type="PDBsum" id="7XNX"/>
<dbReference type="PDBsum" id="7XNY"/>
<dbReference type="PDBsum" id="8A3D"/>
<dbReference type="PDBsum" id="8FKY"/>
<dbReference type="PDBsum" id="8FKZ"/>
<dbReference type="PDBsum" id="8FL2"/>
<dbReference type="PDBsum" id="8FL3"/>
<dbReference type="PDBsum" id="8FL4"/>
<dbReference type="PDBsum" id="8FL6"/>
<dbReference type="PDBsum" id="8FL7"/>
<dbReference type="PDBsum" id="8FL9"/>
<dbReference type="PDBsum" id="8FLA"/>
<dbReference type="PDBsum" id="8FLB"/>
<dbReference type="PDBsum" id="8FLC"/>
<dbReference type="PDBsum" id="8FLD"/>
<dbReference type="PDBsum" id="8FLE"/>
<dbReference type="PDBsum" id="8FLF"/>
<dbReference type="PDBsum" id="8G5Y"/>
<dbReference type="PDBsum" id="8G5Z"/>
<dbReference type="PDBsum" id="8G60"/>
<dbReference type="PDBsum" id="8G61"/>
<dbReference type="PDBsum" id="8G6J"/>
<dbReference type="PDBsum" id="8GLP"/>
<dbReference type="PDBsum" id="8IDT"/>
<dbReference type="PDBsum" id="8IDY"/>
<dbReference type="PDBsum" id="8IE3"/>
<dbReference type="PDBsum" id="8IFD"/>
<dbReference type="PDBsum" id="8IFE"/>
<dbReference type="PDBsum" id="8INE"/>
<dbReference type="PDBsum" id="8INF"/>
<dbReference type="PDBsum" id="8INK"/>
<dbReference type="PDBsum" id="8IPD"/>
<dbReference type="PDBsum" id="8IPX"/>
<dbReference type="PDBsum" id="8IPY"/>
<dbReference type="PDBsum" id="8IR1"/>
<dbReference type="PDBsum" id="8IR3"/>
<dbReference type="PDBsum" id="8JDJ"/>
<dbReference type="PDBsum" id="8JDK"/>
<dbReference type="PDBsum" id="8JDL"/>
<dbReference type="PDBsum" id="8JDM"/>
<dbReference type="PDBsum" id="8K2C"/>
<dbReference type="PDBsum" id="8OHD"/>
<dbReference type="PDBsum" id="8OJ0"/>
<dbReference type="PDBsum" id="8OJ5"/>
<dbReference type="PDBsum" id="8OJ8"/>
<dbReference type="PDBsum" id="8QFD"/>
<dbReference type="PDBsum" id="8QOI"/>
<dbReference type="PDBsum" id="8QYX"/>
<dbReference type="PDBsum" id="8RL2"/>
<dbReference type="PDBsum" id="8UKB"/>
<dbReference type="PDBsum" id="8XSX"/>
<dbReference type="PDBsum" id="8XSY"/>
<dbReference type="PDBsum" id="8XSZ"/>
<dbReference type="PDBsum" id="8Y0W"/>
<dbReference type="PDBsum" id="8Y0X"/>
<dbReference type="PDBsum" id="8YOO"/>
<dbReference type="PDBsum" id="8YOP"/>
<dbReference type="PDBsum" id="9C3H"/>
<dbReference type="PDBsum" id="9G8M"/>
<dbReference type="PDBsum" id="9GMO"/>
<dbReference type="EMDB" id="EMD-0948"/>
<dbReference type="EMDB" id="EMD-0963"/>
<dbReference type="EMDB" id="EMD-0964"/>
<dbReference type="EMDB" id="EMD-0978"/>
<dbReference type="EMDB" id="EMD-10668"/>
<dbReference type="EMDB" id="EMD-10674"/>
<dbReference type="EMDB" id="EMD-10690"/>
<dbReference type="EMDB" id="EMD-10709"/>
<dbReference type="EMDB" id="EMD-11098"/>
<dbReference type="EMDB" id="EMD-11099"/>
<dbReference type="EMDB" id="EMD-11100"/>
<dbReference type="EMDB" id="EMD-11288"/>
<dbReference type="EMDB" id="EMD-11289"/>
<dbReference type="EMDB" id="EMD-11292"/>
<dbReference type="EMDB" id="EMD-11299"/>
<dbReference type="EMDB" id="EMD-12189"/>
<dbReference type="EMDB" id="EMD-13094"/>
<dbReference type="EMDB" id="EMD-14181"/>
<dbReference type="EMDB" id="EMD-15113"/>
<dbReference type="EMDB" id="EMD-16880"/>
<dbReference type="EMDB" id="EMD-16902"/>
<dbReference type="EMDB" id="EMD-16905"/>
<dbReference type="EMDB" id="EMD-16908"/>
<dbReference type="EMDB" id="EMD-18382"/>
<dbReference type="EMDB" id="EMD-18539"/>
<dbReference type="EMDB" id="EMD-18765"/>
<dbReference type="EMDB" id="EMD-19330"/>
<dbReference type="EMDB" id="EMD-29261"/>
<dbReference type="EMDB" id="EMD-29262"/>
<dbReference type="EMDB" id="EMD-29265"/>
<dbReference type="EMDB" id="EMD-29266"/>
<dbReference type="EMDB" id="EMD-29267"/>
<dbReference type="EMDB" id="EMD-29268"/>
<dbReference type="EMDB" id="EMD-29269"/>
<dbReference type="EMDB" id="EMD-29271"/>
<dbReference type="EMDB" id="EMD-29272"/>
<dbReference type="EMDB" id="EMD-29273"/>
<dbReference type="EMDB" id="EMD-29274"/>
<dbReference type="EMDB" id="EMD-29275"/>
<dbReference type="EMDB" id="EMD-29276"/>
<dbReference type="EMDB" id="EMD-29277"/>
<dbReference type="EMDB" id="EMD-29757"/>
<dbReference type="EMDB" id="EMD-29758"/>
<dbReference type="EMDB" id="EMD-29759"/>
<dbReference type="EMDB" id="EMD-29760"/>
<dbReference type="EMDB" id="EMD-29771"/>
<dbReference type="EMDB" id="EMD-31465"/>
<dbReference type="EMDB" id="EMD-33329"/>
<dbReference type="EMDB" id="EMD-33330"/>
<dbReference type="EMDB" id="EMD-35370"/>
<dbReference type="EMDB" id="EMD-35371"/>
<dbReference type="EMDB" id="EMD-35375"/>
<dbReference type="EMDB" id="EMD-35413"/>
<dbReference type="EMDB" id="EMD-35414"/>
<dbReference type="EMDB" id="EMD-35596"/>
<dbReference type="EMDB" id="EMD-35597"/>
<dbReference type="EMDB" id="EMD-35599"/>
<dbReference type="EMDB" id="EMD-35639"/>
<dbReference type="EMDB" id="EMD-35649"/>
<dbReference type="EMDB" id="EMD-35651"/>
<dbReference type="EMDB" id="EMD-35672"/>
<dbReference type="EMDB" id="EMD-35673"/>
<dbReference type="EMDB" id="EMD-36178"/>
<dbReference type="EMDB" id="EMD-36179"/>
<dbReference type="EMDB" id="EMD-36180"/>
<dbReference type="EMDB" id="EMD-36181"/>
<dbReference type="EMDB" id="EMD-36838"/>
<dbReference type="EMDB" id="EMD-38629"/>
<dbReference type="EMDB" id="EMD-38630"/>
<dbReference type="EMDB" id="EMD-38631"/>
<dbReference type="EMDB" id="EMD-3883"/>
<dbReference type="EMDB" id="EMD-39455"/>
<dbReference type="EMDB" id="EMD-39456"/>
<dbReference type="EMDB" id="EMD-40205"/>
<dbReference type="EMDB" id="EMD-4070"/>
<dbReference type="EMDB" id="EMD-42351"/>
<dbReference type="EMDB" id="EMD-45170"/>
<dbReference type="EMDB" id="EMD-51132"/>
<dbReference type="EMDB" id="EMD-51452"/>
<dbReference type="EMDB" id="EMD-9701"/>
<dbReference type="EMDB" id="EMD-9702"/>
<dbReference type="EMDB" id="EMD-9703"/>
<dbReference type="SMR" id="P62888"/>
<dbReference type="BioGRID" id="112075">
    <property type="interactions" value="490"/>
</dbReference>
<dbReference type="ComplexPortal" id="CPX-5183">
    <property type="entry name" value="60S cytosolic large ribosomal subunit"/>
</dbReference>
<dbReference type="ComplexPortal" id="CPX-7664">
    <property type="entry name" value="60S cytosolic large ribosomal subunit, testis-specific variant"/>
</dbReference>
<dbReference type="ComplexPortal" id="CPX-7665">
    <property type="entry name" value="60S cytosolic large ribosomal subunit, striated muscle variant"/>
</dbReference>
<dbReference type="CORUM" id="P62888"/>
<dbReference type="FunCoup" id="P62888">
    <property type="interactions" value="1779"/>
</dbReference>
<dbReference type="IntAct" id="P62888">
    <property type="interactions" value="258"/>
</dbReference>
<dbReference type="MINT" id="P62888"/>
<dbReference type="STRING" id="9606.ENSP00000428085"/>
<dbReference type="GlyGen" id="P62888">
    <property type="glycosylation" value="1 site, 1 O-linked glycan (1 site)"/>
</dbReference>
<dbReference type="iPTMnet" id="P62888"/>
<dbReference type="MetOSite" id="P62888"/>
<dbReference type="PhosphoSitePlus" id="P62888"/>
<dbReference type="SwissPalm" id="P62888"/>
<dbReference type="BioMuta" id="RPL30"/>
<dbReference type="DMDM" id="51702805"/>
<dbReference type="CPTAC" id="CPTAC-434"/>
<dbReference type="CPTAC" id="CPTAC-435"/>
<dbReference type="jPOST" id="P62888"/>
<dbReference type="MassIVE" id="P62888"/>
<dbReference type="PaxDb" id="9606-ENSP00000428085"/>
<dbReference type="PeptideAtlas" id="P62888"/>
<dbReference type="ProteomicsDB" id="57445"/>
<dbReference type="Pumba" id="P62888"/>
<dbReference type="TopDownProteomics" id="P62888"/>
<dbReference type="Antibodypedia" id="1242">
    <property type="antibodies" value="268 antibodies from 31 providers"/>
</dbReference>
<dbReference type="DNASU" id="6156"/>
<dbReference type="Ensembl" id="ENST00000287038.8">
    <property type="protein sequence ID" value="ENSP00000287038.3"/>
    <property type="gene ID" value="ENSG00000156482.11"/>
</dbReference>
<dbReference type="Ensembl" id="ENST00000521291.5">
    <property type="protein sequence ID" value="ENSP00000428085.1"/>
    <property type="gene ID" value="ENSG00000156482.11"/>
</dbReference>
<dbReference type="GeneID" id="6156"/>
<dbReference type="KEGG" id="hsa:6156"/>
<dbReference type="MANE-Select" id="ENST00000287038.8">
    <property type="protein sequence ID" value="ENSP00000287038.3"/>
    <property type="RefSeq nucleotide sequence ID" value="NM_000989.4"/>
    <property type="RefSeq protein sequence ID" value="NP_000980.1"/>
</dbReference>
<dbReference type="UCSC" id="uc003yif.4">
    <property type="organism name" value="human"/>
</dbReference>
<dbReference type="AGR" id="HGNC:10333"/>
<dbReference type="CTD" id="6156"/>
<dbReference type="DisGeNET" id="6156"/>
<dbReference type="GeneCards" id="RPL30"/>
<dbReference type="HGNC" id="HGNC:10333">
    <property type="gene designation" value="RPL30"/>
</dbReference>
<dbReference type="HPA" id="ENSG00000156482">
    <property type="expression patterns" value="Low tissue specificity"/>
</dbReference>
<dbReference type="MIM" id="180467">
    <property type="type" value="gene"/>
</dbReference>
<dbReference type="neXtProt" id="NX_P62888"/>
<dbReference type="OpenTargets" id="ENSG00000156482"/>
<dbReference type="PharmGKB" id="PA34714"/>
<dbReference type="VEuPathDB" id="HostDB:ENSG00000156482"/>
<dbReference type="eggNOG" id="KOG2988">
    <property type="taxonomic scope" value="Eukaryota"/>
</dbReference>
<dbReference type="GeneTree" id="ENSGT00390000012138"/>
<dbReference type="InParanoid" id="P62888"/>
<dbReference type="OMA" id="YFQGGNN"/>
<dbReference type="OrthoDB" id="9512315at2759"/>
<dbReference type="PAN-GO" id="P62888">
    <property type="GO annotations" value="3 GO annotations based on evolutionary models"/>
</dbReference>
<dbReference type="PhylomeDB" id="P62888"/>
<dbReference type="TreeFam" id="TF300252"/>
<dbReference type="PathwayCommons" id="P62888"/>
<dbReference type="Reactome" id="R-HSA-156827">
    <property type="pathway name" value="L13a-mediated translational silencing of Ceruloplasmin expression"/>
</dbReference>
<dbReference type="Reactome" id="R-HSA-156902">
    <property type="pathway name" value="Peptide chain elongation"/>
</dbReference>
<dbReference type="Reactome" id="R-HSA-1799339">
    <property type="pathway name" value="SRP-dependent cotranslational protein targeting to membrane"/>
</dbReference>
<dbReference type="Reactome" id="R-HSA-192823">
    <property type="pathway name" value="Viral mRNA Translation"/>
</dbReference>
<dbReference type="Reactome" id="R-HSA-2408557">
    <property type="pathway name" value="Selenocysteine synthesis"/>
</dbReference>
<dbReference type="Reactome" id="R-HSA-6791226">
    <property type="pathway name" value="Major pathway of rRNA processing in the nucleolus and cytosol"/>
</dbReference>
<dbReference type="Reactome" id="R-HSA-72689">
    <property type="pathway name" value="Formation of a pool of free 40S subunits"/>
</dbReference>
<dbReference type="Reactome" id="R-HSA-72706">
    <property type="pathway name" value="GTP hydrolysis and joining of the 60S ribosomal subunit"/>
</dbReference>
<dbReference type="Reactome" id="R-HSA-72764">
    <property type="pathway name" value="Eukaryotic Translation Termination"/>
</dbReference>
<dbReference type="Reactome" id="R-HSA-9010553">
    <property type="pathway name" value="Regulation of expression of SLITs and ROBOs"/>
</dbReference>
<dbReference type="Reactome" id="R-HSA-9633012">
    <property type="pathway name" value="Response of EIF2AK4 (GCN2) to amino acid deficiency"/>
</dbReference>
<dbReference type="Reactome" id="R-HSA-975956">
    <property type="pathway name" value="Nonsense Mediated Decay (NMD) independent of the Exon Junction Complex (EJC)"/>
</dbReference>
<dbReference type="Reactome" id="R-HSA-975957">
    <property type="pathway name" value="Nonsense Mediated Decay (NMD) enhanced by the Exon Junction Complex (EJC)"/>
</dbReference>
<dbReference type="SignaLink" id="P62888"/>
<dbReference type="SIGNOR" id="P62888"/>
<dbReference type="BioGRID-ORCS" id="6156">
    <property type="hits" value="688 hits in 1103 CRISPR screens"/>
</dbReference>
<dbReference type="CD-CODE" id="91857CE7">
    <property type="entry name" value="Nucleolus"/>
</dbReference>
<dbReference type="CD-CODE" id="FB4E32DD">
    <property type="entry name" value="Presynaptic clusters and postsynaptic densities"/>
</dbReference>
<dbReference type="ChiTaRS" id="RPL30">
    <property type="organism name" value="human"/>
</dbReference>
<dbReference type="EvolutionaryTrace" id="P62888"/>
<dbReference type="GeneWiki" id="RPL30"/>
<dbReference type="GenomeRNAi" id="6156"/>
<dbReference type="Pharos" id="P62888">
    <property type="development level" value="Tbio"/>
</dbReference>
<dbReference type="PRO" id="PR:P62888"/>
<dbReference type="Proteomes" id="UP000005640">
    <property type="component" value="Chromosome 8"/>
</dbReference>
<dbReference type="RNAct" id="P62888">
    <property type="molecule type" value="protein"/>
</dbReference>
<dbReference type="Bgee" id="ENSG00000156482">
    <property type="expression patterns" value="Expressed in parietal pleura and 208 other cell types or tissues"/>
</dbReference>
<dbReference type="ExpressionAtlas" id="P62888">
    <property type="expression patterns" value="baseline and differential"/>
</dbReference>
<dbReference type="GO" id="GO:0005737">
    <property type="term" value="C:cytoplasm"/>
    <property type="evidence" value="ECO:0000303"/>
    <property type="project" value="ComplexPortal"/>
</dbReference>
<dbReference type="GO" id="GO:0005829">
    <property type="term" value="C:cytosol"/>
    <property type="evidence" value="ECO:0000304"/>
    <property type="project" value="Reactome"/>
</dbReference>
<dbReference type="GO" id="GO:0022625">
    <property type="term" value="C:cytosolic large ribosomal subunit"/>
    <property type="evidence" value="ECO:0000314"/>
    <property type="project" value="UniProtKB"/>
</dbReference>
<dbReference type="GO" id="GO:0022626">
    <property type="term" value="C:cytosolic ribosome"/>
    <property type="evidence" value="ECO:0000314"/>
    <property type="project" value="FlyBase"/>
</dbReference>
<dbReference type="GO" id="GO:0070062">
    <property type="term" value="C:extracellular exosome"/>
    <property type="evidence" value="ECO:0007005"/>
    <property type="project" value="UniProtKB"/>
</dbReference>
<dbReference type="GO" id="GO:0005925">
    <property type="term" value="C:focal adhesion"/>
    <property type="evidence" value="ECO:0007005"/>
    <property type="project" value="UniProtKB"/>
</dbReference>
<dbReference type="GO" id="GO:0016020">
    <property type="term" value="C:membrane"/>
    <property type="evidence" value="ECO:0007005"/>
    <property type="project" value="UniProtKB"/>
</dbReference>
<dbReference type="GO" id="GO:0005634">
    <property type="term" value="C:nucleus"/>
    <property type="evidence" value="ECO:0000314"/>
    <property type="project" value="UniProtKB"/>
</dbReference>
<dbReference type="GO" id="GO:0014069">
    <property type="term" value="C:postsynaptic density"/>
    <property type="evidence" value="ECO:0000314"/>
    <property type="project" value="SynGO"/>
</dbReference>
<dbReference type="GO" id="GO:0003723">
    <property type="term" value="F:RNA binding"/>
    <property type="evidence" value="ECO:0007005"/>
    <property type="project" value="UniProtKB"/>
</dbReference>
<dbReference type="GO" id="GO:0003735">
    <property type="term" value="F:structural constituent of ribosome"/>
    <property type="evidence" value="ECO:0000314"/>
    <property type="project" value="UniProtKB"/>
</dbReference>
<dbReference type="GO" id="GO:0061844">
    <property type="term" value="P:antimicrobial humoral immune response mediated by antimicrobial peptide"/>
    <property type="evidence" value="ECO:0000314"/>
    <property type="project" value="UniProtKB"/>
</dbReference>
<dbReference type="GO" id="GO:0002181">
    <property type="term" value="P:cytoplasmic translation"/>
    <property type="evidence" value="ECO:0000314"/>
    <property type="project" value="UniProtKB"/>
</dbReference>
<dbReference type="GO" id="GO:0050829">
    <property type="term" value="P:defense response to Gram-negative bacterium"/>
    <property type="evidence" value="ECO:0000314"/>
    <property type="project" value="UniProtKB"/>
</dbReference>
<dbReference type="GO" id="GO:0031640">
    <property type="term" value="P:killing of cells of another organism"/>
    <property type="evidence" value="ECO:0000314"/>
    <property type="project" value="UniProtKB"/>
</dbReference>
<dbReference type="GO" id="GO:0006412">
    <property type="term" value="P:translation"/>
    <property type="evidence" value="ECO:0000304"/>
    <property type="project" value="UniProtKB"/>
</dbReference>
<dbReference type="FunFam" id="3.30.1330.30:FF:000001">
    <property type="entry name" value="60S ribosomal protein L30"/>
    <property type="match status" value="1"/>
</dbReference>
<dbReference type="Gene3D" id="3.30.1330.30">
    <property type="match status" value="1"/>
</dbReference>
<dbReference type="HAMAP" id="MF_00481">
    <property type="entry name" value="Ribosomal_eL30"/>
    <property type="match status" value="1"/>
</dbReference>
<dbReference type="InterPro" id="IPR000231">
    <property type="entry name" value="Ribosomal_eL30"/>
</dbReference>
<dbReference type="InterPro" id="IPR039109">
    <property type="entry name" value="Ribosomal_eL30-like"/>
</dbReference>
<dbReference type="InterPro" id="IPR029064">
    <property type="entry name" value="Ribosomal_eL30-like_sf"/>
</dbReference>
<dbReference type="InterPro" id="IPR022991">
    <property type="entry name" value="Ribosomal_eL30_CS"/>
</dbReference>
<dbReference type="InterPro" id="IPR004038">
    <property type="entry name" value="Ribosomal_eL8/eL30/eS12/Gad45"/>
</dbReference>
<dbReference type="NCBIfam" id="NF002172">
    <property type="entry name" value="PRK01018.1"/>
    <property type="match status" value="1"/>
</dbReference>
<dbReference type="PANTHER" id="PTHR11449">
    <property type="entry name" value="RIBOSOMAL PROTEIN L30"/>
    <property type="match status" value="1"/>
</dbReference>
<dbReference type="Pfam" id="PF01248">
    <property type="entry name" value="Ribosomal_L7Ae"/>
    <property type="match status" value="1"/>
</dbReference>
<dbReference type="SUPFAM" id="SSF55315">
    <property type="entry name" value="L30e-like"/>
    <property type="match status" value="1"/>
</dbReference>
<dbReference type="PROSITE" id="PS00709">
    <property type="entry name" value="RIBOSOMAL_L30E_1"/>
    <property type="match status" value="1"/>
</dbReference>
<dbReference type="PROSITE" id="PS00993">
    <property type="entry name" value="RIBOSOMAL_L30E_2"/>
    <property type="match status" value="1"/>
</dbReference>